<sequence length="481" mass="53819">MQAKLTKNEFIERLKTSEGKQFNVDLWYGFQCFDYANAGWKVLFGLLLKGLGAKDIPFANNFDGLATVYQNTPDFLAQPGDMVVFGSNYGAGYGHVAWVIEATLDYIIVYEQNWLGGGWTDGIEQPAGVGKKLQDDNMLMISLCGLSVRILKVRQRHDQFNLLHKHPKKETAKPQPKAVELKIIKDVVKGYDLPKRGSNPKGIVIHNDAGSKGATAEAYRNGLVNAPLSRLEAGIAHSYVSGNTVWQALDESQVGWHTANQIGNKYYYGIEVCQSMGADNATFLKNEQATFQECARLLKKWGLPANRNTIRLHNEFTSTSCPHRSSVLHTGFDPVTRGLLPEDKRLQLKDYFIKQIRAYMDGKIPVATVSNESSASSNTVKPVASAWKRNKYGTYYMEESARFTNGNQPITVRKVGPFLSCPVGYQFQPGGYCDYTEVMLQDGHVWVGYTWEGQRYYLPIRTWNGSAPPNQILGDLWGEIS</sequence>
<proteinExistence type="inferred from homology"/>
<accession>P24556</accession>
<protein>
    <recommendedName>
        <fullName>Autolysin</fullName>
        <ecNumber>3.5.1.28</ecNumber>
    </recommendedName>
    <alternativeName>
        <fullName>N-acetylmuramoyl-L-alanine amidase</fullName>
    </alternativeName>
</protein>
<keyword id="KW-0961">Cell wall biogenesis/degradation</keyword>
<keyword id="KW-0178">Competence</keyword>
<keyword id="KW-0378">Hydrolase</keyword>
<keyword id="KW-0964">Secreted</keyword>
<keyword id="KW-0749">Sporulation</keyword>
<evidence type="ECO:0000255" key="1"/>
<evidence type="ECO:0000255" key="2">
    <source>
        <dbReference type="PROSITE-ProRule" id="PRU00048"/>
    </source>
</evidence>
<evidence type="ECO:0000255" key="3">
    <source>
        <dbReference type="PROSITE-ProRule" id="PRU01117"/>
    </source>
</evidence>
<evidence type="ECO:0000305" key="4"/>
<reference key="1">
    <citation type="journal article" date="1991" name="Gene">
        <title>Sequence analysis of a Staphylococcus aureus gene encoding a peptidoglycan hydrolase activity.</title>
        <authorList>
            <person name="Wang X."/>
            <person name="Wilkinson B.J."/>
            <person name="Jayaswal R.K."/>
        </authorList>
    </citation>
    <scope>NUCLEOTIDE SEQUENCE [GENOMIC DNA]</scope>
</reference>
<gene>
    <name type="primary">lytA</name>
</gene>
<name>LYTA_STAAU</name>
<dbReference type="EC" id="3.5.1.28"/>
<dbReference type="EMBL" id="M76714">
    <property type="status" value="NOT_ANNOTATED_CDS"/>
    <property type="molecule type" value="Genomic_DNA"/>
</dbReference>
<dbReference type="PIR" id="JQ1147">
    <property type="entry name" value="JQ1147"/>
</dbReference>
<dbReference type="SMR" id="P24556"/>
<dbReference type="MEROPS" id="C51.001"/>
<dbReference type="GO" id="GO:0005576">
    <property type="term" value="C:extracellular region"/>
    <property type="evidence" value="ECO:0007669"/>
    <property type="project" value="UniProtKB-SubCell"/>
</dbReference>
<dbReference type="GO" id="GO:0008745">
    <property type="term" value="F:N-acetylmuramoyl-L-alanine amidase activity"/>
    <property type="evidence" value="ECO:0007669"/>
    <property type="project" value="UniProtKB-EC"/>
</dbReference>
<dbReference type="GO" id="GO:0071555">
    <property type="term" value="P:cell wall organization"/>
    <property type="evidence" value="ECO:0007669"/>
    <property type="project" value="UniProtKB-KW"/>
</dbReference>
<dbReference type="GO" id="GO:0030420">
    <property type="term" value="P:establishment of competence for transformation"/>
    <property type="evidence" value="ECO:0007669"/>
    <property type="project" value="UniProtKB-KW"/>
</dbReference>
<dbReference type="GO" id="GO:0009253">
    <property type="term" value="P:peptidoglycan catabolic process"/>
    <property type="evidence" value="ECO:0007669"/>
    <property type="project" value="InterPro"/>
</dbReference>
<dbReference type="GO" id="GO:0030435">
    <property type="term" value="P:sporulation resulting in formation of a cellular spore"/>
    <property type="evidence" value="ECO:0007669"/>
    <property type="project" value="UniProtKB-KW"/>
</dbReference>
<dbReference type="CDD" id="cd06583">
    <property type="entry name" value="PGRP"/>
    <property type="match status" value="1"/>
</dbReference>
<dbReference type="FunFam" id="3.90.1720.10:FF:000005">
    <property type="entry name" value="Amidase"/>
    <property type="match status" value="1"/>
</dbReference>
<dbReference type="FunFam" id="3.40.80.10:FF:000005">
    <property type="entry name" value="N-acetylmuramoyl-L-alanine amidase"/>
    <property type="match status" value="1"/>
</dbReference>
<dbReference type="Gene3D" id="3.90.1720.10">
    <property type="entry name" value="endopeptidase domain like (from Nostoc punctiforme)"/>
    <property type="match status" value="1"/>
</dbReference>
<dbReference type="Gene3D" id="3.40.80.10">
    <property type="entry name" value="Peptidoglycan recognition protein-like"/>
    <property type="match status" value="1"/>
</dbReference>
<dbReference type="Gene3D" id="2.30.30.40">
    <property type="entry name" value="SH3 Domains"/>
    <property type="match status" value="1"/>
</dbReference>
<dbReference type="InterPro" id="IPR036505">
    <property type="entry name" value="Amidase/PGRP_sf"/>
</dbReference>
<dbReference type="InterPro" id="IPR002502">
    <property type="entry name" value="Amidase_domain"/>
</dbReference>
<dbReference type="InterPro" id="IPR007921">
    <property type="entry name" value="CHAP_dom"/>
</dbReference>
<dbReference type="InterPro" id="IPR038765">
    <property type="entry name" value="Papain-like_cys_pep_sf"/>
</dbReference>
<dbReference type="InterPro" id="IPR003646">
    <property type="entry name" value="SH3-like_bac-type"/>
</dbReference>
<dbReference type="Pfam" id="PF01510">
    <property type="entry name" value="Amidase_2"/>
    <property type="match status" value="1"/>
</dbReference>
<dbReference type="Pfam" id="PF05257">
    <property type="entry name" value="CHAP"/>
    <property type="match status" value="1"/>
</dbReference>
<dbReference type="Pfam" id="PF08460">
    <property type="entry name" value="SH3_5"/>
    <property type="match status" value="1"/>
</dbReference>
<dbReference type="SMART" id="SM00644">
    <property type="entry name" value="Ami_2"/>
    <property type="match status" value="1"/>
</dbReference>
<dbReference type="SMART" id="SM00287">
    <property type="entry name" value="SH3b"/>
    <property type="match status" value="1"/>
</dbReference>
<dbReference type="SUPFAM" id="SSF54001">
    <property type="entry name" value="Cysteine proteinases"/>
    <property type="match status" value="1"/>
</dbReference>
<dbReference type="SUPFAM" id="SSF55846">
    <property type="entry name" value="N-acetylmuramoyl-L-alanine amidase-like"/>
    <property type="match status" value="1"/>
</dbReference>
<dbReference type="PROSITE" id="PS50911">
    <property type="entry name" value="CHAP"/>
    <property type="match status" value="1"/>
</dbReference>
<dbReference type="PROSITE" id="PS51781">
    <property type="entry name" value="SH3B"/>
    <property type="match status" value="1"/>
</dbReference>
<comment type="function">
    <text>Autolysins are involved in some important biological processes such as cell separation, cell-wall turnover, competence for genetic transformation, formation of the flagella and sporulation. Autolysin strictly depends on the presence of choline-containing cell walls for activity.</text>
</comment>
<comment type="catalytic activity">
    <reaction>
        <text>Hydrolyzes the link between N-acetylmuramoyl residues and L-amino acid residues in certain cell-wall glycopeptides.</text>
        <dbReference type="EC" id="3.5.1.28"/>
    </reaction>
</comment>
<comment type="subcellular location">
    <subcellularLocation>
        <location evidence="4">Secreted</location>
    </subcellularLocation>
</comment>
<comment type="miscellaneous">
    <text evidence="4">This protein is probably encoded by a prophage (AC Q8SDS7).</text>
</comment>
<comment type="similarity">
    <text evidence="4">Belongs to the N-acetylmuramoyl-L-alanine amidase 2 family.</text>
</comment>
<organism>
    <name type="scientific">Staphylococcus aureus</name>
    <dbReference type="NCBI Taxonomy" id="1280"/>
    <lineage>
        <taxon>Bacteria</taxon>
        <taxon>Bacillati</taxon>
        <taxon>Bacillota</taxon>
        <taxon>Bacilli</taxon>
        <taxon>Bacillales</taxon>
        <taxon>Staphylococcaceae</taxon>
        <taxon>Staphylococcus</taxon>
    </lineage>
</organism>
<feature type="chain" id="PRO_0000070441" description="Autolysin">
    <location>
        <begin position="1"/>
        <end position="481"/>
    </location>
</feature>
<feature type="domain" description="Peptidase C51" evidence="2">
    <location>
        <begin position="7"/>
        <end position="142"/>
    </location>
</feature>
<feature type="domain" description="N-acetylmuramoyl-L-alanine amidase" evidence="1">
    <location>
        <begin position="198"/>
        <end position="323"/>
    </location>
</feature>
<feature type="domain" description="SH3b" evidence="3">
    <location>
        <begin position="398"/>
        <end position="466"/>
    </location>
</feature>